<gene>
    <name evidence="1" type="primary">upp</name>
    <name type="ordered locus">NGR_c34570</name>
</gene>
<proteinExistence type="inferred from homology"/>
<evidence type="ECO:0000255" key="1">
    <source>
        <dbReference type="HAMAP-Rule" id="MF_01218"/>
    </source>
</evidence>
<keyword id="KW-0021">Allosteric enzyme</keyword>
<keyword id="KW-0328">Glycosyltransferase</keyword>
<keyword id="KW-0342">GTP-binding</keyword>
<keyword id="KW-0460">Magnesium</keyword>
<keyword id="KW-0547">Nucleotide-binding</keyword>
<keyword id="KW-1185">Reference proteome</keyword>
<keyword id="KW-0808">Transferase</keyword>
<sequence>MDGVTVIDHPLVQHKLTIMRKKETSTAGFRRLLREISTLLCYEVTRDLELTMERIETPLQEIDAPILEGKKLVFASILRAGNGLLEGMLELVPSARVSHIGVYRDHETLQPVEYYFKAPDSLNERLVIVVDPMLATGNSSIAAIDKLKERGAKNIRFLCLLAAPEGIRNFHGVHPDVPIFTASIDSHLNEKGYIVPGLGDAGDRMYGTK</sequence>
<comment type="function">
    <text evidence="1">Catalyzes the conversion of uracil and 5-phospho-alpha-D-ribose 1-diphosphate (PRPP) to UMP and diphosphate.</text>
</comment>
<comment type="catalytic activity">
    <reaction evidence="1">
        <text>UMP + diphosphate = 5-phospho-alpha-D-ribose 1-diphosphate + uracil</text>
        <dbReference type="Rhea" id="RHEA:13017"/>
        <dbReference type="ChEBI" id="CHEBI:17568"/>
        <dbReference type="ChEBI" id="CHEBI:33019"/>
        <dbReference type="ChEBI" id="CHEBI:57865"/>
        <dbReference type="ChEBI" id="CHEBI:58017"/>
        <dbReference type="EC" id="2.4.2.9"/>
    </reaction>
</comment>
<comment type="cofactor">
    <cofactor evidence="1">
        <name>Mg(2+)</name>
        <dbReference type="ChEBI" id="CHEBI:18420"/>
    </cofactor>
    <text evidence="1">Binds 1 Mg(2+) ion per subunit. The magnesium is bound as Mg-PRPP.</text>
</comment>
<comment type="activity regulation">
    <text evidence="1">Allosterically activated by GTP.</text>
</comment>
<comment type="pathway">
    <text evidence="1">Pyrimidine metabolism; UMP biosynthesis via salvage pathway; UMP from uracil: step 1/1.</text>
</comment>
<comment type="similarity">
    <text evidence="1">Belongs to the UPRTase family.</text>
</comment>
<feature type="chain" id="PRO_1000164831" description="Uracil phosphoribosyltransferase">
    <location>
        <begin position="1"/>
        <end position="209"/>
    </location>
</feature>
<feature type="binding site" evidence="1">
    <location>
        <position position="79"/>
    </location>
    <ligand>
        <name>5-phospho-alpha-D-ribose 1-diphosphate</name>
        <dbReference type="ChEBI" id="CHEBI:58017"/>
    </ligand>
</feature>
<feature type="binding site" evidence="1">
    <location>
        <position position="104"/>
    </location>
    <ligand>
        <name>5-phospho-alpha-D-ribose 1-diphosphate</name>
        <dbReference type="ChEBI" id="CHEBI:58017"/>
    </ligand>
</feature>
<feature type="binding site" evidence="1">
    <location>
        <begin position="131"/>
        <end position="139"/>
    </location>
    <ligand>
        <name>5-phospho-alpha-D-ribose 1-diphosphate</name>
        <dbReference type="ChEBI" id="CHEBI:58017"/>
    </ligand>
</feature>
<feature type="binding site" evidence="1">
    <location>
        <position position="194"/>
    </location>
    <ligand>
        <name>uracil</name>
        <dbReference type="ChEBI" id="CHEBI:17568"/>
    </ligand>
</feature>
<feature type="binding site" evidence="1">
    <location>
        <begin position="199"/>
        <end position="201"/>
    </location>
    <ligand>
        <name>uracil</name>
        <dbReference type="ChEBI" id="CHEBI:17568"/>
    </ligand>
</feature>
<feature type="binding site" evidence="1">
    <location>
        <position position="200"/>
    </location>
    <ligand>
        <name>5-phospho-alpha-D-ribose 1-diphosphate</name>
        <dbReference type="ChEBI" id="CHEBI:58017"/>
    </ligand>
</feature>
<organism>
    <name type="scientific">Sinorhizobium fredii (strain NBRC 101917 / NGR234)</name>
    <dbReference type="NCBI Taxonomy" id="394"/>
    <lineage>
        <taxon>Bacteria</taxon>
        <taxon>Pseudomonadati</taxon>
        <taxon>Pseudomonadota</taxon>
        <taxon>Alphaproteobacteria</taxon>
        <taxon>Hyphomicrobiales</taxon>
        <taxon>Rhizobiaceae</taxon>
        <taxon>Sinorhizobium/Ensifer group</taxon>
        <taxon>Sinorhizobium</taxon>
    </lineage>
</organism>
<protein>
    <recommendedName>
        <fullName evidence="1">Uracil phosphoribosyltransferase</fullName>
        <ecNumber evidence="1">2.4.2.9</ecNumber>
    </recommendedName>
    <alternativeName>
        <fullName evidence="1">UMP pyrophosphorylase</fullName>
    </alternativeName>
    <alternativeName>
        <fullName evidence="1">UPRTase</fullName>
    </alternativeName>
</protein>
<dbReference type="EC" id="2.4.2.9" evidence="1"/>
<dbReference type="EMBL" id="CP001389">
    <property type="protein sequence ID" value="ACP27181.1"/>
    <property type="molecule type" value="Genomic_DNA"/>
</dbReference>
<dbReference type="RefSeq" id="WP_012709928.1">
    <property type="nucleotide sequence ID" value="NC_012587.1"/>
</dbReference>
<dbReference type="RefSeq" id="YP_002827934.1">
    <property type="nucleotide sequence ID" value="NC_012587.1"/>
</dbReference>
<dbReference type="SMR" id="C3MBH2"/>
<dbReference type="STRING" id="394.NGR_c34570"/>
<dbReference type="KEGG" id="rhi:NGR_c34570"/>
<dbReference type="PATRIC" id="fig|394.7.peg.6304"/>
<dbReference type="eggNOG" id="COG0035">
    <property type="taxonomic scope" value="Bacteria"/>
</dbReference>
<dbReference type="HOGENOM" id="CLU_067096_2_2_5"/>
<dbReference type="OrthoDB" id="9781675at2"/>
<dbReference type="UniPathway" id="UPA00574">
    <property type="reaction ID" value="UER00636"/>
</dbReference>
<dbReference type="Proteomes" id="UP000001054">
    <property type="component" value="Chromosome"/>
</dbReference>
<dbReference type="GO" id="GO:0005525">
    <property type="term" value="F:GTP binding"/>
    <property type="evidence" value="ECO:0007669"/>
    <property type="project" value="UniProtKB-KW"/>
</dbReference>
<dbReference type="GO" id="GO:0000287">
    <property type="term" value="F:magnesium ion binding"/>
    <property type="evidence" value="ECO:0007669"/>
    <property type="project" value="UniProtKB-UniRule"/>
</dbReference>
<dbReference type="GO" id="GO:0004845">
    <property type="term" value="F:uracil phosphoribosyltransferase activity"/>
    <property type="evidence" value="ECO:0007669"/>
    <property type="project" value="UniProtKB-UniRule"/>
</dbReference>
<dbReference type="GO" id="GO:0044206">
    <property type="term" value="P:UMP salvage"/>
    <property type="evidence" value="ECO:0007669"/>
    <property type="project" value="UniProtKB-UniRule"/>
</dbReference>
<dbReference type="GO" id="GO:0006223">
    <property type="term" value="P:uracil salvage"/>
    <property type="evidence" value="ECO:0007669"/>
    <property type="project" value="InterPro"/>
</dbReference>
<dbReference type="CDD" id="cd06223">
    <property type="entry name" value="PRTases_typeI"/>
    <property type="match status" value="1"/>
</dbReference>
<dbReference type="FunFam" id="3.40.50.2020:FF:000003">
    <property type="entry name" value="Uracil phosphoribosyltransferase"/>
    <property type="match status" value="1"/>
</dbReference>
<dbReference type="Gene3D" id="3.40.50.2020">
    <property type="match status" value="1"/>
</dbReference>
<dbReference type="HAMAP" id="MF_01218_B">
    <property type="entry name" value="Upp_B"/>
    <property type="match status" value="1"/>
</dbReference>
<dbReference type="InterPro" id="IPR000836">
    <property type="entry name" value="PRibTrfase_dom"/>
</dbReference>
<dbReference type="InterPro" id="IPR029057">
    <property type="entry name" value="PRTase-like"/>
</dbReference>
<dbReference type="InterPro" id="IPR034332">
    <property type="entry name" value="Upp_B"/>
</dbReference>
<dbReference type="InterPro" id="IPR050054">
    <property type="entry name" value="UPRTase/APRTase"/>
</dbReference>
<dbReference type="InterPro" id="IPR005765">
    <property type="entry name" value="Ura_phspho_trans"/>
</dbReference>
<dbReference type="NCBIfam" id="NF001097">
    <property type="entry name" value="PRK00129.1"/>
    <property type="match status" value="1"/>
</dbReference>
<dbReference type="NCBIfam" id="TIGR01091">
    <property type="entry name" value="upp"/>
    <property type="match status" value="1"/>
</dbReference>
<dbReference type="PANTHER" id="PTHR32315">
    <property type="entry name" value="ADENINE PHOSPHORIBOSYLTRANSFERASE"/>
    <property type="match status" value="1"/>
</dbReference>
<dbReference type="PANTHER" id="PTHR32315:SF4">
    <property type="entry name" value="URACIL PHOSPHORIBOSYLTRANSFERASE, CHLOROPLASTIC"/>
    <property type="match status" value="1"/>
</dbReference>
<dbReference type="Pfam" id="PF14681">
    <property type="entry name" value="UPRTase"/>
    <property type="match status" value="1"/>
</dbReference>
<dbReference type="SUPFAM" id="SSF53271">
    <property type="entry name" value="PRTase-like"/>
    <property type="match status" value="1"/>
</dbReference>
<accession>C3MBH2</accession>
<reference key="1">
    <citation type="journal article" date="2009" name="Appl. Environ. Microbiol.">
        <title>Rhizobium sp. strain NGR234 possesses a remarkable number of secretion systems.</title>
        <authorList>
            <person name="Schmeisser C."/>
            <person name="Liesegang H."/>
            <person name="Krysciak D."/>
            <person name="Bakkou N."/>
            <person name="Le Quere A."/>
            <person name="Wollherr A."/>
            <person name="Heinemeyer I."/>
            <person name="Morgenstern B."/>
            <person name="Pommerening-Roeser A."/>
            <person name="Flores M."/>
            <person name="Palacios R."/>
            <person name="Brenner S."/>
            <person name="Gottschalk G."/>
            <person name="Schmitz R.A."/>
            <person name="Broughton W.J."/>
            <person name="Perret X."/>
            <person name="Strittmatter A.W."/>
            <person name="Streit W.R."/>
        </authorList>
    </citation>
    <scope>NUCLEOTIDE SEQUENCE [LARGE SCALE GENOMIC DNA]</scope>
    <source>
        <strain>NBRC 101917 / NGR234</strain>
    </source>
</reference>
<name>UPP_SINFN</name>